<proteinExistence type="evidence at protein level"/>
<protein>
    <recommendedName>
        <fullName>Bacteriorhodopsin</fullName>
        <shortName>BR</shortName>
    </recommendedName>
    <alternativeName>
        <fullName>Bacterioopsin</fullName>
        <shortName>BO</shortName>
    </alternativeName>
</protein>
<evidence type="ECO:0000269" key="1">
    <source>
    </source>
</evidence>
<evidence type="ECO:0000269" key="2">
    <source>
    </source>
</evidence>
<evidence type="ECO:0000269" key="3">
    <source>
    </source>
</evidence>
<evidence type="ECO:0000269" key="4">
    <source>
    </source>
</evidence>
<evidence type="ECO:0000269" key="5">
    <source>
    </source>
</evidence>
<evidence type="ECO:0000269" key="6">
    <source>
    </source>
</evidence>
<evidence type="ECO:0000269" key="7">
    <source>
    </source>
</evidence>
<evidence type="ECO:0000269" key="8">
    <source>
    </source>
</evidence>
<evidence type="ECO:0000269" key="9">
    <source>
    </source>
</evidence>
<evidence type="ECO:0000269" key="10">
    <source>
    </source>
</evidence>
<evidence type="ECO:0000269" key="11">
    <source>
    </source>
</evidence>
<evidence type="ECO:0000269" key="12">
    <source>
    </source>
</evidence>
<evidence type="ECO:0000269" key="13">
    <source>
    </source>
</evidence>
<evidence type="ECO:0000269" key="14">
    <source>
    </source>
</evidence>
<evidence type="ECO:0000269" key="15">
    <source>
    </source>
</evidence>
<evidence type="ECO:0000269" key="16">
    <source>
    </source>
</evidence>
<evidence type="ECO:0000269" key="17">
    <source>
    </source>
</evidence>
<evidence type="ECO:0000269" key="18">
    <source ref="6"/>
</evidence>
<evidence type="ECO:0000305" key="19"/>
<evidence type="ECO:0000305" key="20">
    <source>
    </source>
</evidence>
<evidence type="ECO:0000305" key="21">
    <source>
    </source>
</evidence>
<evidence type="ECO:0000305" key="22">
    <source>
    </source>
</evidence>
<evidence type="ECO:0007744" key="23">
    <source>
        <dbReference type="PDB" id="1C3W"/>
    </source>
</evidence>
<evidence type="ECO:0007744" key="24">
    <source>
        <dbReference type="PDB" id="1F50"/>
    </source>
</evidence>
<evidence type="ECO:0007744" key="25">
    <source>
        <dbReference type="PDB" id="1IW9"/>
    </source>
</evidence>
<evidence type="ECO:0007744" key="26">
    <source>
        <dbReference type="PDB" id="1KG8"/>
    </source>
</evidence>
<evidence type="ECO:0007744" key="27">
    <source>
        <dbReference type="PDB" id="1KG9"/>
    </source>
</evidence>
<evidence type="ECO:0007744" key="28">
    <source>
        <dbReference type="PDB" id="1M0L"/>
    </source>
</evidence>
<evidence type="ECO:0007744" key="29">
    <source>
        <dbReference type="PDB" id="1M0M"/>
    </source>
</evidence>
<evidence type="ECO:0007744" key="30">
    <source>
        <dbReference type="PDB" id="1O0A"/>
    </source>
</evidence>
<evidence type="ECO:0007744" key="31">
    <source>
        <dbReference type="PDB" id="1P8H"/>
    </source>
</evidence>
<evidence type="ECO:0007744" key="32">
    <source>
        <dbReference type="PDB" id="1P8U"/>
    </source>
</evidence>
<evidence type="ECO:0007744" key="33">
    <source>
        <dbReference type="PDB" id="1Q5J"/>
    </source>
</evidence>
<evidence type="ECO:0007744" key="34">
    <source>
        <dbReference type="PDB" id="1QHJ"/>
    </source>
</evidence>
<evidence type="ECO:0007744" key="35">
    <source>
        <dbReference type="PDB" id="1QKP"/>
    </source>
</evidence>
<evidence type="ECO:0007744" key="36">
    <source>
        <dbReference type="PDB" id="1QM8"/>
    </source>
</evidence>
<evidence type="ECO:0007744" key="37">
    <source>
        <dbReference type="PDB" id="1R2N"/>
    </source>
</evidence>
<evidence type="ECO:0007744" key="38">
    <source>
        <dbReference type="PDB" id="1R84"/>
    </source>
</evidence>
<evidence type="ECO:0007744" key="39">
    <source>
        <dbReference type="PDB" id="1S8J"/>
    </source>
</evidence>
<evidence type="ECO:0007744" key="40">
    <source>
        <dbReference type="PDB" id="1TN0"/>
    </source>
</evidence>
<evidence type="ECO:0007744" key="41">
    <source>
        <dbReference type="PDB" id="1TN5"/>
    </source>
</evidence>
<evidence type="ECO:0007744" key="42">
    <source>
        <dbReference type="PDB" id="1UCQ"/>
    </source>
</evidence>
<evidence type="ECO:0007744" key="43">
    <source>
        <dbReference type="PDB" id="1X0I"/>
    </source>
</evidence>
<evidence type="ECO:0007744" key="44">
    <source>
        <dbReference type="PDB" id="1X0K"/>
    </source>
</evidence>
<evidence type="ECO:0007744" key="45">
    <source>
        <dbReference type="PDB" id="1X0S"/>
    </source>
</evidence>
<evidence type="ECO:0007744" key="46">
    <source>
        <dbReference type="PDB" id="1XJI"/>
    </source>
</evidence>
<evidence type="ECO:0007744" key="47">
    <source>
        <dbReference type="PDB" id="2AT9"/>
    </source>
</evidence>
<evidence type="ECO:0007744" key="48">
    <source>
        <dbReference type="PDB" id="2BRD"/>
    </source>
</evidence>
<evidence type="ECO:0007744" key="49">
    <source>
        <dbReference type="PDB" id="2I1X"/>
    </source>
</evidence>
<evidence type="ECO:0007744" key="50">
    <source>
        <dbReference type="PDB" id="2I20"/>
    </source>
</evidence>
<evidence type="ECO:0007744" key="51">
    <source>
        <dbReference type="PDB" id="2I21"/>
    </source>
</evidence>
<evidence type="ECO:0007744" key="52">
    <source>
        <dbReference type="PDB" id="2NTU"/>
    </source>
</evidence>
<evidence type="ECO:0007744" key="53">
    <source>
        <dbReference type="PDB" id="2NTW"/>
    </source>
</evidence>
<evidence type="ECO:0007744" key="54">
    <source>
        <dbReference type="PDB" id="2WJK"/>
    </source>
</evidence>
<evidence type="ECO:0007744" key="55">
    <source>
        <dbReference type="PDB" id="2WJL"/>
    </source>
</evidence>
<evidence type="ECO:0007744" key="56">
    <source>
        <dbReference type="PDB" id="2ZFE"/>
    </source>
</evidence>
<evidence type="ECO:0007744" key="57">
    <source>
        <dbReference type="PDB" id="2ZZL"/>
    </source>
</evidence>
<evidence type="ECO:0007744" key="58">
    <source>
        <dbReference type="PDB" id="3COD"/>
    </source>
</evidence>
<evidence type="ECO:0007744" key="59">
    <source>
        <dbReference type="PDB" id="3HAN"/>
    </source>
</evidence>
<evidence type="ECO:0007744" key="60">
    <source>
        <dbReference type="PDB" id="3HAO"/>
    </source>
</evidence>
<evidence type="ECO:0007744" key="61">
    <source>
        <dbReference type="PDB" id="3HAP"/>
    </source>
</evidence>
<evidence type="ECO:0007744" key="62">
    <source>
        <dbReference type="PDB" id="3HAQ"/>
    </source>
</evidence>
<evidence type="ECO:0007744" key="63">
    <source>
        <dbReference type="PDB" id="3HAR"/>
    </source>
</evidence>
<evidence type="ECO:0007744" key="64">
    <source>
        <dbReference type="PDB" id="3HAS"/>
    </source>
</evidence>
<evidence type="ECO:0007744" key="65">
    <source>
        <dbReference type="PDB" id="3NS0"/>
    </source>
</evidence>
<evidence type="ECO:0007744" key="66">
    <source>
        <dbReference type="PDB" id="3NSB"/>
    </source>
</evidence>
<evidence type="ECO:0007744" key="67">
    <source>
        <dbReference type="PDB" id="3T45"/>
    </source>
</evidence>
<evidence type="ECO:0007744" key="68">
    <source>
        <dbReference type="PDB" id="3UTV"/>
    </source>
</evidence>
<evidence type="ECO:0007744" key="69">
    <source>
        <dbReference type="PDB" id="3UTW"/>
    </source>
</evidence>
<evidence type="ECO:0007744" key="70">
    <source>
        <dbReference type="PDB" id="3UTX"/>
    </source>
</evidence>
<evidence type="ECO:0007744" key="71">
    <source>
        <dbReference type="PDB" id="3VHZ"/>
    </source>
</evidence>
<evidence type="ECO:0007744" key="72">
    <source>
        <dbReference type="PDB" id="3VI0"/>
    </source>
</evidence>
<evidence type="ECO:0007744" key="73">
    <source>
        <dbReference type="PDB" id="4FPD"/>
    </source>
</evidence>
<evidence type="ECO:0007744" key="74">
    <source>
        <dbReference type="PDB" id="4HWL"/>
    </source>
</evidence>
<evidence type="ECO:0007744" key="75">
    <source>
        <dbReference type="PDB" id="4MD1"/>
    </source>
</evidence>
<evidence type="ECO:0007744" key="76">
    <source>
        <dbReference type="PDB" id="4MD2"/>
    </source>
</evidence>
<evidence type="ECO:0007744" key="77">
    <source>
        <dbReference type="PDB" id="4X31"/>
    </source>
</evidence>
<evidence type="ECO:0007744" key="78">
    <source>
        <dbReference type="PDB" id="4X32"/>
    </source>
</evidence>
<evidence type="ECO:0007744" key="79">
    <source>
        <dbReference type="PDB" id="5A44"/>
    </source>
</evidence>
<evidence type="ECO:0007744" key="80">
    <source>
        <dbReference type="PDB" id="5A45"/>
    </source>
</evidence>
<evidence type="ECO:0007744" key="81">
    <source>
        <dbReference type="PDB" id="5B34"/>
    </source>
</evidence>
<evidence type="ECO:0007744" key="82">
    <source>
        <dbReference type="PDB" id="5B6V"/>
    </source>
</evidence>
<evidence type="ECO:0007744" key="83">
    <source>
        <dbReference type="PDB" id="5B6W"/>
    </source>
</evidence>
<evidence type="ECO:0007744" key="84">
    <source>
        <dbReference type="PDB" id="5B6X"/>
    </source>
</evidence>
<evidence type="ECO:0007744" key="85">
    <source>
        <dbReference type="PDB" id="5B6Y"/>
    </source>
</evidence>
<evidence type="ECO:0007744" key="86">
    <source>
        <dbReference type="PDB" id="5B6Z"/>
    </source>
</evidence>
<evidence type="ECO:0007744" key="87">
    <source>
        <dbReference type="PDB" id="5BR2"/>
    </source>
</evidence>
<evidence type="ECO:0007744" key="88">
    <source>
        <dbReference type="PDB" id="5BR5"/>
    </source>
</evidence>
<evidence type="ECO:0007744" key="89">
    <source>
        <dbReference type="PDB" id="5H2H"/>
    </source>
</evidence>
<evidence type="ECO:0007744" key="90">
    <source>
        <dbReference type="PDB" id="5H2I"/>
    </source>
</evidence>
<evidence type="ECO:0007744" key="91">
    <source>
        <dbReference type="PDB" id="5H2J"/>
    </source>
</evidence>
<evidence type="ECO:0007744" key="92">
    <source>
        <dbReference type="PDB" id="5H2K"/>
    </source>
</evidence>
<evidence type="ECO:0007744" key="93">
    <source>
        <dbReference type="PDB" id="5H2L"/>
    </source>
</evidence>
<evidence type="ECO:0007744" key="94">
    <source>
        <dbReference type="PDB" id="5H2M"/>
    </source>
</evidence>
<evidence type="ECO:0007744" key="95">
    <source>
        <dbReference type="PDB" id="5H2N"/>
    </source>
</evidence>
<evidence type="ECO:0007744" key="96">
    <source>
        <dbReference type="PDB" id="5H2O"/>
    </source>
</evidence>
<evidence type="ECO:0007744" key="97">
    <source>
        <dbReference type="PDB" id="5H2P"/>
    </source>
</evidence>
<evidence type="ECO:0007744" key="98">
    <source>
        <dbReference type="PDB" id="5J7A"/>
    </source>
</evidence>
<evidence type="ECO:0007829" key="99">
    <source>
        <dbReference type="PDB" id="1QKO"/>
    </source>
</evidence>
<evidence type="ECO:0007829" key="100">
    <source>
        <dbReference type="PDB" id="4FPD"/>
    </source>
</evidence>
<evidence type="ECO:0007829" key="101">
    <source>
        <dbReference type="PDB" id="5ZIL"/>
    </source>
</evidence>
<evidence type="ECO:0007829" key="102">
    <source>
        <dbReference type="PDB" id="7Z09"/>
    </source>
</evidence>
<accession>P02945</accession>
<accession>Q9HPU5</accession>
<feature type="propeptide" id="PRO_0000020246" evidence="10 14 18">
    <location>
        <begin position="1"/>
        <end position="13"/>
    </location>
</feature>
<feature type="chain" id="PRO_0000020247" description="Bacteriorhodopsin" evidence="10 18">
    <location>
        <begin position="14"/>
        <end position="262"/>
    </location>
</feature>
<feature type="topological domain" description="Extracellular" evidence="1 9 23">
    <location>
        <begin position="14"/>
        <end position="22"/>
    </location>
</feature>
<feature type="transmembrane region" description="Helical; Name=Helix A" evidence="1 9 23">
    <location>
        <begin position="23"/>
        <end position="42"/>
    </location>
</feature>
<feature type="topological domain" description="Cytoplasmic" evidence="1 9 23">
    <location>
        <begin position="43"/>
        <end position="56"/>
    </location>
</feature>
<feature type="transmembrane region" description="Helical; Name=Helix B" evidence="1 9 23">
    <location>
        <begin position="57"/>
        <end position="75"/>
    </location>
</feature>
<feature type="topological domain" description="Extracellular" evidence="1 9 23">
    <location>
        <begin position="76"/>
        <end position="92"/>
    </location>
</feature>
<feature type="transmembrane region" description="Helical; Name=Helix C" evidence="1 9 23">
    <location>
        <begin position="93"/>
        <end position="109"/>
    </location>
</feature>
<feature type="topological domain" description="Cytoplasmic" evidence="1 9 23">
    <location>
        <begin position="110"/>
        <end position="120"/>
    </location>
</feature>
<feature type="transmembrane region" description="Helical; Name=Helix D" evidence="1 9 23">
    <location>
        <begin position="121"/>
        <end position="140"/>
    </location>
</feature>
<feature type="topological domain" description="Extracellular" evidence="1 9 23">
    <location>
        <begin position="141"/>
        <end position="147"/>
    </location>
</feature>
<feature type="transmembrane region" description="Helical; Name=Helix E" evidence="1 9 23">
    <location>
        <begin position="148"/>
        <end position="167"/>
    </location>
</feature>
<feature type="topological domain" description="Cytoplasmic" evidence="1 9 23">
    <location>
        <begin position="168"/>
        <end position="185"/>
    </location>
</feature>
<feature type="transmembrane region" description="Helical; Name=Helix F" evidence="1 9 23">
    <location>
        <begin position="186"/>
        <end position="204"/>
    </location>
</feature>
<feature type="topological domain" description="Extracellular" evidence="1 9 23">
    <location>
        <begin position="205"/>
        <end position="216"/>
    </location>
</feature>
<feature type="transmembrane region" description="Helical; Name=Helix G" evidence="1 9 23">
    <location>
        <begin position="217"/>
        <end position="236"/>
    </location>
</feature>
<feature type="topological domain" description="Cytoplasmic" evidence="1 9 23">
    <location>
        <begin position="237"/>
        <end position="262"/>
    </location>
</feature>
<feature type="site" description="Primary proton acceptor" evidence="20 21 22">
    <location>
        <position position="98"/>
    </location>
</feature>
<feature type="modified residue" description="Pyrrolidone carboxylic acid" evidence="14">
    <location>
        <position position="14"/>
    </location>
</feature>
<feature type="modified residue" description="N6-(retinylidene)lysine" evidence="1 2 3 4 5 6 7 9 12 13 15 17 23 24 25 26 27 28 29 30 31 32 33 34 35 36 37 38 39 40 41 42 43 44 45 46 47 48 49 50 51 52 53 54 55 56 57 58 59 60 61 62 63 64 65 66 67 68 69 70 71 72 73 74 75 76 77 78 79 80 81 82 83 84 85 86 87 88 89 90 91 92 93 94 95 96 97 98">
    <location>
        <position position="229"/>
    </location>
</feature>
<feature type="sequence conflict" description="In Ref. 6; AA sequence." evidence="19" ref="6">
    <original>Q</original>
    <variation>E</variation>
    <location>
        <position position="118"/>
    </location>
</feature>
<feature type="sequence conflict" description="In Ref. 6; AA sequence." evidence="19" ref="6">
    <original>L</original>
    <variation>I</variation>
    <location>
        <position position="124"/>
    </location>
</feature>
<feature type="sequence conflict" description="In Ref. 6; AA sequence." evidence="19" ref="6">
    <original>I</original>
    <variation>L</variation>
    <location>
        <position position="130"/>
    </location>
</feature>
<feature type="sequence conflict" description="In Ref. 6; AA sequence." evidence="19" ref="6">
    <location>
        <position position="151"/>
    </location>
</feature>
<feature type="sequence conflict" description="In Ref. 6; AA sequence." evidence="19" ref="6">
    <original>L</original>
    <variation>S</variation>
    <location>
        <position position="159"/>
    </location>
</feature>
<feature type="sequence conflict" description="In Ref. 6; AA sequence." evidence="19" ref="6">
    <original>L</original>
    <variation>A</variation>
    <location>
        <position position="219"/>
    </location>
</feature>
<feature type="turn" evidence="99">
    <location>
        <begin position="19"/>
        <end position="22"/>
    </location>
</feature>
<feature type="helix" evidence="102">
    <location>
        <begin position="23"/>
        <end position="43"/>
    </location>
</feature>
<feature type="turn" evidence="102">
    <location>
        <begin position="44"/>
        <end position="46"/>
    </location>
</feature>
<feature type="helix" evidence="102">
    <location>
        <begin position="50"/>
        <end position="74"/>
    </location>
</feature>
<feature type="turn" evidence="102">
    <location>
        <begin position="75"/>
        <end position="78"/>
    </location>
</feature>
<feature type="strand" evidence="102">
    <location>
        <begin position="79"/>
        <end position="84"/>
    </location>
</feature>
<feature type="strand" evidence="102">
    <location>
        <begin position="87"/>
        <end position="92"/>
    </location>
</feature>
<feature type="helix" evidence="102">
    <location>
        <begin position="94"/>
        <end position="113"/>
    </location>
</feature>
<feature type="helix" evidence="102">
    <location>
        <begin position="118"/>
        <end position="140"/>
    </location>
</feature>
<feature type="helix" evidence="102">
    <location>
        <begin position="144"/>
        <end position="167"/>
    </location>
</feature>
<feature type="helix" evidence="102">
    <location>
        <begin position="170"/>
        <end position="172"/>
    </location>
</feature>
<feature type="helix" evidence="101">
    <location>
        <begin position="173"/>
        <end position="175"/>
    </location>
</feature>
<feature type="helix" evidence="102">
    <location>
        <begin position="178"/>
        <end position="204"/>
    </location>
</feature>
<feature type="turn" evidence="102">
    <location>
        <begin position="206"/>
        <end position="209"/>
    </location>
</feature>
<feature type="strand" evidence="100">
    <location>
        <begin position="210"/>
        <end position="212"/>
    </location>
</feature>
<feature type="helix" evidence="102">
    <location>
        <begin position="214"/>
        <end position="237"/>
    </location>
</feature>
<feature type="helix" evidence="102">
    <location>
        <begin position="240"/>
        <end position="242"/>
    </location>
</feature>
<reference key="1">
    <citation type="journal article" date="1981" name="Proc. Natl. Acad. Sci. U.S.A.">
        <title>The bacteriorhodopsin gene.</title>
        <authorList>
            <person name="Dunn R.J."/>
            <person name="McCoy J."/>
            <person name="Simsek M."/>
            <person name="Majumdar A."/>
            <person name="Chang S.H."/>
            <person name="RajBhandary U.L."/>
            <person name="Khorana H.G."/>
        </authorList>
    </citation>
    <scope>NUCLEOTIDE SEQUENCE [GENOMIC DNA]</scope>
    <source>
        <strain>R1 / S9</strain>
    </source>
</reference>
<reference key="2">
    <citation type="journal article" date="1983" name="Cold Spring Harb. Symp. Quant. Biol.">
        <title>Studies on the light-transducing pigment bacteriorhodopsin.</title>
        <authorList>
            <person name="Dunn R.J."/>
            <person name="Hackett N.R."/>
            <person name="Huang K.-S."/>
            <person name="Jones S."/>
            <person name="Khorana H.G."/>
            <person name="Lee D.-S."/>
            <person name="Liao M.-J."/>
            <person name="Lo K.-M."/>
            <person name="McCoy J."/>
            <person name="Noguchi S."/>
            <person name="Radhakrishnan R."/>
            <person name="RajBhandary U.L."/>
        </authorList>
    </citation>
    <scope>NUCLEOTIDE SEQUENCE [GENOMIC DNA]</scope>
</reference>
<reference key="3">
    <citation type="journal article" date="1993" name="J. Bacteriol.">
        <title>Bacterioopsin, haloopsin, and sensory opsin I of the halobacterial isolate Halobacterium sp. strain SG1: three new members of a growing family.</title>
        <authorList>
            <person name="Soppa J."/>
            <person name="Duschl J."/>
            <person name="Oesterhelt D."/>
        </authorList>
    </citation>
    <scope>NUCLEOTIDE SEQUENCE [GENOMIC DNA]</scope>
    <source>
        <strain>SG1</strain>
    </source>
</reference>
<reference key="4">
    <citation type="journal article" date="1984" name="J. Biol. Chem.">
        <title>Bacteriorhodopsin precursor. Characterization and its integration into the purple membrane.</title>
        <authorList>
            <person name="Seehra J.S."/>
            <person name="Khorana H.G."/>
        </authorList>
    </citation>
    <scope>PROTEIN SEQUENCE</scope>
    <scope>SUBCELLULAR LOCATION</scope>
    <scope>TOPOLOGY</scope>
    <scope>RETINAL BINDING</scope>
</reference>
<reference key="5">
    <citation type="journal article" date="2000" name="Proc. Natl. Acad. Sci. U.S.A.">
        <title>Genome sequence of Halobacterium species NRC-1.</title>
        <authorList>
            <person name="Ng W.V."/>
            <person name="Kennedy S.P."/>
            <person name="Mahairas G.G."/>
            <person name="Berquist B."/>
            <person name="Pan M."/>
            <person name="Shukla H.D."/>
            <person name="Lasky S.R."/>
            <person name="Baliga N.S."/>
            <person name="Thorsson V."/>
            <person name="Sbrogna J."/>
            <person name="Swartzell S."/>
            <person name="Weir D."/>
            <person name="Hall J."/>
            <person name="Dahl T.A."/>
            <person name="Welti R."/>
            <person name="Goo Y.A."/>
            <person name="Leithauser B."/>
            <person name="Keller K."/>
            <person name="Cruz R."/>
            <person name="Danson M.J."/>
            <person name="Hough D.W."/>
            <person name="Maddocks D.G."/>
            <person name="Jablonski P.E."/>
            <person name="Krebs M.P."/>
            <person name="Angevine C.M."/>
            <person name="Dale H."/>
            <person name="Isenbarger T.A."/>
            <person name="Peck R.F."/>
            <person name="Pohlschroder M."/>
            <person name="Spudich J.L."/>
            <person name="Jung K.-H."/>
            <person name="Alam M."/>
            <person name="Freitas T."/>
            <person name="Hou S."/>
            <person name="Daniels C.J."/>
            <person name="Dennis P.P."/>
            <person name="Omer A.D."/>
            <person name="Ebhardt H."/>
            <person name="Lowe T.M."/>
            <person name="Liang P."/>
            <person name="Riley M."/>
            <person name="Hood L."/>
            <person name="DasSarma S."/>
        </authorList>
    </citation>
    <scope>NUCLEOTIDE SEQUENCE [LARGE SCALE GENOMIC DNA]</scope>
    <source>
        <strain>ATCC 700922 / JCM 11081 / NRC-1</strain>
    </source>
</reference>
<reference key="6">
    <citation type="journal article" date="1978" name="Bioorg. Khim.">
        <title>The amino acid sequence of bacteriorhodopsin.</title>
        <authorList>
            <person name="Ovchinnikov Y.A."/>
            <person name="Abdulaev N.G."/>
            <person name="Feigina M.Y."/>
            <person name="Kiselev A.V."/>
            <person name="Lobanov N.A."/>
            <person name="Nasimov I.V."/>
        </authorList>
    </citation>
    <scope>PROTEIN SEQUENCE OF 14-261</scope>
</reference>
<reference key="7">
    <citation type="journal article" date="1979" name="Proc. Natl. Acad. Sci. U.S.A.">
        <title>Amino acid sequence of bacteriorhodopsin.</title>
        <authorList>
            <person name="Khorana H.G."/>
            <person name="Gerber G.E."/>
            <person name="Herlihy W.C."/>
            <person name="Gray C.P."/>
            <person name="Anderegg R.J."/>
            <person name="Nihei K."/>
            <person name="Biemann K."/>
        </authorList>
    </citation>
    <scope>PROTEIN SEQUENCE OF 14-261</scope>
</reference>
<reference key="8">
    <citation type="journal article" date="1998" name="Protein Sci.">
        <title>Mass spectrometric analysis of integral membrane proteins: application to complete mapping of bacteriorhodopsins and rhodopsin.</title>
        <authorList>
            <person name="Ball L.E."/>
            <person name="Oatis J.E. Jr."/>
            <person name="Dharmasiri K."/>
            <person name="Busman M."/>
            <person name="Wang J."/>
            <person name="Cowden L.B."/>
            <person name="Galijatovic A."/>
            <person name="Chen N."/>
            <person name="Crouch R.K."/>
            <person name="Knapp D.R."/>
        </authorList>
    </citation>
    <scope>PROTEIN SEQUENCE OF 14-248</scope>
    <scope>PYROGLUTAMATE FORMATION AT GLN-14</scope>
</reference>
<reference key="9">
    <citation type="journal article" date="1981" name="Proc. Natl. Acad. Sci. U.S.A.">
        <title>Attachment site(s) of retinal in bacteriorhodopsin.</title>
        <authorList>
            <person name="Katre N.V."/>
            <person name="Wolber P.K."/>
            <person name="Stoeckenius W."/>
            <person name="Stroud R.M."/>
        </authorList>
    </citation>
    <scope>RETINAL-BINDING SITE</scope>
</reference>
<reference key="10">
    <citation type="journal article" date="1998" name="Protein Sci.">
        <title>Electrospray-ionization mass spectrometry of intact intrinsic membrane proteins.</title>
        <authorList>
            <person name="Whitelegge J.P."/>
            <person name="Gundersen C.B."/>
            <person name="Faull K.F."/>
        </authorList>
    </citation>
    <scope>MASS SPECTROMETRY</scope>
</reference>
<reference key="11">
    <citation type="journal article" date="1989" name="J. Mol. Biol.">
        <title>Tertiary structure of bacteriorhodopsin. Positions and orientations of helices A and B in the structural map determined by neutron diffraction.</title>
        <authorList>
            <person name="Popot J.-L."/>
            <person name="Engleman D.M."/>
            <person name="Gurel O."/>
            <person name="Zaccai G."/>
        </authorList>
    </citation>
    <scope>STRUCTURE BY NEUTRON DIFFRACTION</scope>
    <scope>SUBUNIT</scope>
    <scope>TOPOLOGY</scope>
</reference>
<reference key="12">
    <citation type="journal article" date="1990" name="J. Mol. Biol.">
        <title>Model for the structure of bacteriorhodopsin based on high-resolution electron cryo-microscopy.</title>
        <authorList>
            <person name="Henderson R."/>
            <person name="Baldwin J.M."/>
            <person name="Ceska T.A."/>
            <person name="Zemlin F."/>
            <person name="Beckmann E."/>
            <person name="Downing K.H."/>
        </authorList>
    </citation>
    <scope>STRUCTURE BY ELECTRON MICROSCOPY (3.5 ANGSTROMS) OF 14-261 IN COMPLEX WITH ALL-TRANS-RETINAL</scope>
</reference>
<reference key="13">
    <citation type="journal article" date="1996" name="J. Mol. Biol.">
        <title>Electron-crystallographic refinement of the structure of bacteriorhodopsin.</title>
        <authorList>
            <person name="Grigorieff N."/>
            <person name="Ceska T.A."/>
            <person name="Downing K.H."/>
            <person name="Baldwin J.M."/>
            <person name="Henderson R."/>
        </authorList>
    </citation>
    <scope>STRUCTURE BY ELECTRON MICROSCOPY (3.5 ANGSTROMS) OF 14-261 IN COMPLEX WITH ALL-TRANS-RETINAL</scope>
</reference>
<reference key="14">
    <citation type="journal article" date="1992" name="Eur. J. Biochem.">
        <title>Three-dimensional structure of proteolytic fragment 163-231 of bacterioopsin determined from nuclear magnetic resonance data in solution.</title>
        <authorList>
            <person name="Barsukov I.L."/>
            <person name="Nolde D.E."/>
            <person name="Lomize A.L."/>
            <person name="Arseniev A.S."/>
        </authorList>
    </citation>
    <scope>STRUCTURE BY NMR OF 176-244</scope>
</reference>
<reference key="15">
    <citation type="journal article" date="1992" name="Eur. J. Biochem.">
        <title>1H-15N-NMR studies of bacteriorhodopsin Halobacterium halobium. Conformational dynamics of the four-helical bundle.</title>
        <authorList>
            <person name="Orekhov V.Y."/>
            <person name="Abdulaeva G.V."/>
            <person name="Musina L.Y."/>
            <person name="Arseniev A.S."/>
        </authorList>
    </citation>
    <scope>STRUCTURE BY NMR OF 1-231</scope>
</reference>
<reference key="16">
    <citation type="journal article" date="1997" name="Nature">
        <title>Surface of bacteriorhodopsin revealed by high-resolution electron crystallography.</title>
        <authorList>
            <person name="Kimura Y."/>
            <person name="Vassylyev D.G."/>
            <person name="Miyazawa A."/>
            <person name="Kidera A."/>
            <person name="Matsushima M."/>
            <person name="Mitsuoka K."/>
            <person name="Murata K."/>
            <person name="Hirai T."/>
            <person name="Fujiyoshi Y."/>
        </authorList>
    </citation>
    <scope>STRUCTURE BY ELECTRON MICROSCOPY (3.0 ANGSTROMS) OF 15-244</scope>
</reference>
<reference key="17">
    <citation type="journal article" date="1997" name="Science">
        <title>X-ray structure of bacteriorhodopsin at 2.5-A from microcrystals grown in lipidic cubic phases.</title>
        <authorList>
            <person name="Pebay-Peyroula E."/>
            <person name="Rummel G."/>
            <person name="Rosenbusch J.P."/>
            <person name="Landau E.M."/>
        </authorList>
    </citation>
    <scope>X-RAY CRYSTALLOGRAPHY (2.35 ANGSTROMS) OF 14-261 IN COMPLEX WITH ALL-TRANS-RETINAL</scope>
    <scope>SUBUNIT</scope>
    <scope>TOPOLOGY</scope>
</reference>
<reference key="18">
    <citation type="journal article" date="1998" name="Proc. Natl. Acad. Sci. U.S.A.">
        <title>Lipid patches in membrane protein oligomers: crystal structure of the bacteriorhodopsin-lipid complex.</title>
        <authorList>
            <person name="Essen L.-O."/>
            <person name="Siegert R."/>
            <person name="Lehmann W.D."/>
            <person name="Oesterhelt D."/>
        </authorList>
    </citation>
    <scope>X-RAY CRYSTALLOGRAPHY (2.9 ANGSTROMS) OF 14-261 IN COMPLEX WITH ALL-TRANS-RETINAL</scope>
    <scope>SUBUNIT</scope>
    <scope>TOPOLOGY</scope>
</reference>
<reference key="19">
    <citation type="journal article" date="1998" name="Science">
        <title>Proton transfer pathways in bacteriorhodopsin at 2.3 Angstrom resolution.</title>
        <authorList>
            <person name="Luecke H."/>
            <person name="Richter H.-T."/>
            <person name="Lanyi J.K."/>
        </authorList>
    </citation>
    <scope>X-RAY CRYSTALLOGRAPHY (2.3 ANGSTROMS) OF 14-261 IN COMPLEX WITH ALL-TRANS-RETINAL</scope>
    <scope>SUBUNIT</scope>
    <scope>TOPOLOGY</scope>
</reference>
<reference key="20">
    <citation type="journal article" date="1999" name="J. Mol. Biol.">
        <title>Structure of bacteriorhodopsin at 1.55-A resolution.</title>
        <authorList>
            <person name="Luecke H."/>
            <person name="Schobert B."/>
            <person name="Richter H.-T."/>
            <person name="Cartailler J.-P."/>
            <person name="Lanyi J.K."/>
        </authorList>
    </citation>
    <scope>X-RAY CRYSTALLOGRAPHY (1.55 ANGSTROMS) OF 18-244 IN COMPLEX WITH ALL-TRANS-RETINAL</scope>
    <scope>SUBUNIT</scope>
    <scope>TOPOLOGY</scope>
</reference>
<reference key="21">
    <citation type="journal article" date="1999" name="Nature">
        <title>High-resolution X-ray structure of an early intermediate in the bacteriorhodopsin photocycle.</title>
        <authorList>
            <person name="Edman K."/>
            <person name="Nollert P."/>
            <person name="Royant A."/>
            <person name="Belrhali H."/>
            <person name="Pebay-Peyroula E."/>
            <person name="Hajdu J."/>
            <person name="Neutze R."/>
            <person name="Landau E.M."/>
        </authorList>
    </citation>
    <scope>X-RAY CRYSTALLOGRAPHY (2.10 ANGSTROMS) OF 14-261 IN COMPLEX WITH ALL-TRANS-RETINAL</scope>
    <scope>TOPOLOGY</scope>
</reference>
<reference key="22">
    <citation type="journal article" date="1999" name="Structure">
        <title>Protein, lipid and water organization in bacteriorhodopsin crystals: a molecular view of the purple membrane at 1.9 A resolution.</title>
        <authorList>
            <person name="Belrhali H."/>
            <person name="Nollert P."/>
            <person name="Royant A."/>
            <person name="Menzel C."/>
            <person name="Rosenbusch J.P."/>
            <person name="Landau E.M."/>
            <person name="Pebay-Peyroula E."/>
        </authorList>
    </citation>
    <scope>X-RAY CRYSTALLOGRAPHY (1.9 ANGSTROMS) OF 14-261 IN COMPLEX WITH ALL-TRANS-RETINAL</scope>
    <scope>TOPOLOGY</scope>
</reference>
<reference key="23">
    <citation type="journal article" date="2000" name="J. Mol. Biol.">
        <title>Coupling photoisomerization of retinal to directional transport in bacteriorhodopsin.</title>
        <authorList>
            <person name="Luecke H."/>
            <person name="Schobert B."/>
            <person name="Cartailler J.-P."/>
            <person name="Richter H.T."/>
            <person name="Rosengarth A."/>
            <person name="Needleman R."/>
            <person name="Lanyi J.K."/>
        </authorList>
    </citation>
    <scope>X-RAY CRYSTALLOGRAPHY (1.7 ANGSTROMS) OF 18-245 IN COMPLEX WITH ALL-TRANS-RETINAL</scope>
    <scope>FUNCTION</scope>
    <scope>TOPOLOGY</scope>
</reference>
<reference key="24">
    <citation type="journal article" date="2000" name="Nature">
        <title>Helix deformation is coupled to vectorial proton transport in the photocycle of bacteriorhodopsin.</title>
        <authorList>
            <person name="Royant A."/>
            <person name="Edman K."/>
            <person name="Ursby T."/>
            <person name="Pebay-Peyroula E."/>
            <person name="Landau E.M."/>
            <person name="Neutze R."/>
        </authorList>
    </citation>
    <scope>X-RAY CRYSTALLOGRAPHY (2.1 ANGSTROMS) OF 18-245 IN COMPLEX WITH ALL-TRANS-RETINAL</scope>
    <scope>TOPOLOGY</scope>
</reference>
<reference key="25">
    <citation type="journal article" date="2000" name="Nature">
        <title>Molecular mechanism of vectorial proton translocation by bacteriorhodopsin.</title>
        <authorList>
            <person name="Subramaniam S."/>
            <person name="Henderson R."/>
        </authorList>
    </citation>
    <scope>X-RAY CRYSTALLOGRAPHY (3.2 ANGSTROMS) OF 14-261 IN COMPLEX WITH ALL-TRANS-RETINAL</scope>
    <scope>FUNCTION</scope>
    <scope>TOPOLOGY</scope>
</reference>
<reference key="26">
    <citation type="journal article" date="2002" name="J. Mol. Biol.">
        <title>Bicelle crystallization: a new method for crystallizing membrane proteins yields a monomeric bacteriorhodopsin structure.</title>
        <authorList>
            <person name="Faham S."/>
            <person name="Bowie J.U."/>
        </authorList>
    </citation>
    <scope>X-RAY CRYSTALLOGRAPHY (2.0 ANGSTROMS) OF 14-244 IN COMPLEX WITH ALL-TRANS-RETINAL</scope>
    <scope>TOPOLOGY</scope>
</reference>
<reference evidence="82 83 84 85 86 89 90 91 92 93" key="27">
    <citation type="journal article" date="2016" name="Science">
        <title>A three-dimensional movie of structural changes in bacteriorhodopsin.</title>
        <authorList>
            <person name="Nango E."/>
            <person name="Royant A."/>
            <person name="Kubo M."/>
            <person name="Nakane T."/>
            <person name="Wickstrand C."/>
            <person name="Kimura T."/>
            <person name="Tanaka T."/>
            <person name="Tono K."/>
            <person name="Song C."/>
            <person name="Tanaka R."/>
            <person name="Arima T."/>
            <person name="Yamashita A."/>
            <person name="Kobayashi J."/>
            <person name="Hosaka T."/>
            <person name="Mizohata E."/>
            <person name="Nogly P."/>
            <person name="Sugahara M."/>
            <person name="Nam D."/>
            <person name="Nomura T."/>
            <person name="Shimamura T."/>
            <person name="Im D."/>
            <person name="Fujiwara T."/>
            <person name="Yamanaka Y."/>
            <person name="Jeon B."/>
            <person name="Nishizawa T."/>
            <person name="Oda K."/>
            <person name="Fukuda M."/>
            <person name="Andersson R."/>
            <person name="Bath P."/>
            <person name="Dods R."/>
            <person name="Davidsson J."/>
            <person name="Matsuoka S."/>
            <person name="Kawatake S."/>
            <person name="Murata M."/>
            <person name="Nureki O."/>
            <person name="Owada S."/>
            <person name="Kameshima T."/>
            <person name="Hatsui T."/>
            <person name="Joti Y."/>
            <person name="Schertler G."/>
            <person name="Yabashi M."/>
            <person name="Bondar A.N."/>
            <person name="Standfuss J."/>
            <person name="Neutze R."/>
            <person name="Iwata S."/>
        </authorList>
    </citation>
    <scope>X-RAY CRYSTALLOGRAPHY (2.00 ANGSTROMS) OF 14-261 IN COMPLEX WITH ALL-TRANS-RETINAL</scope>
    <scope>TOPOLOGY</scope>
    <scope>FUNCTION</scope>
</reference>
<organism>
    <name type="scientific">Halobacterium salinarum (strain ATCC 700922 / JCM 11081 / NRC-1)</name>
    <name type="common">Halobacterium halobium</name>
    <dbReference type="NCBI Taxonomy" id="64091"/>
    <lineage>
        <taxon>Archaea</taxon>
        <taxon>Methanobacteriati</taxon>
        <taxon>Methanobacteriota</taxon>
        <taxon>Stenosarchaea group</taxon>
        <taxon>Halobacteria</taxon>
        <taxon>Halobacteriales</taxon>
        <taxon>Halobacteriaceae</taxon>
        <taxon>Halobacterium</taxon>
        <taxon>Halobacterium salinarum NRC-34001</taxon>
    </lineage>
</organism>
<name>BACR_HALSA</name>
<comment type="function">
    <text evidence="20 21 22">Light-driven proton pump.</text>
</comment>
<comment type="subunit">
    <text evidence="1 8 13 15 17">Homotrimer.</text>
</comment>
<comment type="subcellular location">
    <subcellularLocation>
        <location evidence="11">Cell membrane</location>
        <topology evidence="1 2 3 4 6 7 8 9 11 13 15 17">Multi-pass membrane protein</topology>
    </subcellularLocation>
</comment>
<comment type="PTM">
    <text evidence="1 2 3 4 5 6 7 9 11 12 13 15 17">The covalent binding of retinal to the apoprotein, bacterioopsin, generates bacteriorhodopsin.</text>
</comment>
<comment type="mass spectrometry"/>
<comment type="similarity">
    <text evidence="19">Belongs to the archaeal/bacterial/fungal opsin family.</text>
</comment>
<dbReference type="EMBL" id="V00474">
    <property type="protein sequence ID" value="CAA23744.1"/>
    <property type="molecule type" value="Genomic_DNA"/>
</dbReference>
<dbReference type="EMBL" id="M11720">
    <property type="protein sequence ID" value="AAA72504.1"/>
    <property type="molecule type" value="Genomic_DNA"/>
</dbReference>
<dbReference type="EMBL" id="X70293">
    <property type="protein sequence ID" value="CAA49774.1"/>
    <property type="molecule type" value="Genomic_DNA"/>
</dbReference>
<dbReference type="EMBL" id="AE004437">
    <property type="protein sequence ID" value="AAG19772.1"/>
    <property type="molecule type" value="Genomic_DNA"/>
</dbReference>
<dbReference type="PIR" id="A93898">
    <property type="entry name" value="RAHSB"/>
</dbReference>
<dbReference type="PIR" id="H84300">
    <property type="entry name" value="H84300"/>
</dbReference>
<dbReference type="PDB" id="1AP9">
    <property type="method" value="X-ray"/>
    <property type="resolution" value="2.35 A"/>
    <property type="chains" value="A=14-261"/>
</dbReference>
<dbReference type="PDB" id="1AT9">
    <property type="method" value="X-ray"/>
    <property type="resolution" value="3.00 A"/>
    <property type="chains" value="A=15-261"/>
</dbReference>
<dbReference type="PDB" id="1BCT">
    <property type="method" value="NMR"/>
    <property type="chains" value="A=176-244"/>
</dbReference>
<dbReference type="PDB" id="1BHA">
    <property type="method" value="NMR"/>
    <property type="chains" value="A=14-84"/>
</dbReference>
<dbReference type="PDB" id="1BHB">
    <property type="method" value="NMR"/>
    <property type="chains" value="A=14-84"/>
</dbReference>
<dbReference type="PDB" id="1BM1">
    <property type="method" value="X-ray"/>
    <property type="resolution" value="3.50 A"/>
    <property type="chains" value="A=15-261"/>
</dbReference>
<dbReference type="PDB" id="1BRD">
    <property type="method" value="EM"/>
    <property type="chains" value="A=15-261"/>
</dbReference>
<dbReference type="PDB" id="1BRR">
    <property type="method" value="X-ray"/>
    <property type="resolution" value="2.90 A"/>
    <property type="chains" value="A/B/C=15-261"/>
</dbReference>
<dbReference type="PDB" id="1BRX">
    <property type="method" value="X-ray"/>
    <property type="resolution" value="2.30 A"/>
    <property type="chains" value="A=15-261"/>
</dbReference>
<dbReference type="PDB" id="1C3W">
    <property type="method" value="X-ray"/>
    <property type="resolution" value="1.55 A"/>
    <property type="chains" value="A=18-244"/>
</dbReference>
<dbReference type="PDB" id="1C8R">
    <property type="method" value="X-ray"/>
    <property type="resolution" value="1.80 A"/>
    <property type="chains" value="A=14-262"/>
</dbReference>
<dbReference type="PDB" id="1C8S">
    <property type="method" value="X-ray"/>
    <property type="resolution" value="2.00 A"/>
    <property type="chains" value="A=18-235"/>
</dbReference>
<dbReference type="PDB" id="1CWQ">
    <property type="method" value="X-ray"/>
    <property type="resolution" value="2.25 A"/>
    <property type="chains" value="A/B=14-261"/>
</dbReference>
<dbReference type="PDB" id="1DZE">
    <property type="method" value="X-ray"/>
    <property type="resolution" value="2.50 A"/>
    <property type="chains" value="A=14-261"/>
</dbReference>
<dbReference type="PDB" id="1E0P">
    <property type="method" value="X-ray"/>
    <property type="resolution" value="2.10 A"/>
    <property type="chains" value="A=18-245"/>
</dbReference>
<dbReference type="PDB" id="1F4Z">
    <property type="method" value="X-ray"/>
    <property type="resolution" value="1.80 A"/>
    <property type="chains" value="A=18-244"/>
</dbReference>
<dbReference type="PDB" id="1F50">
    <property type="method" value="X-ray"/>
    <property type="resolution" value="1.70 A"/>
    <property type="chains" value="A=18-244"/>
</dbReference>
<dbReference type="PDB" id="1FBB">
    <property type="method" value="X-ray"/>
    <property type="resolution" value="3.20 A"/>
    <property type="chains" value="A=14-261"/>
</dbReference>
<dbReference type="PDB" id="1FBK">
    <property type="method" value="X-ray"/>
    <property type="resolution" value="3.20 A"/>
    <property type="chains" value="A=14-261"/>
</dbReference>
<dbReference type="PDB" id="1IW6">
    <property type="method" value="X-ray"/>
    <property type="resolution" value="2.30 A"/>
    <property type="chains" value="A=14-261"/>
</dbReference>
<dbReference type="PDB" id="1IW9">
    <property type="method" value="X-ray"/>
    <property type="resolution" value="2.50 A"/>
    <property type="chains" value="A=14-261"/>
</dbReference>
<dbReference type="PDB" id="1IXF">
    <property type="method" value="X-ray"/>
    <property type="resolution" value="2.60 A"/>
    <property type="chains" value="A=14-261"/>
</dbReference>
<dbReference type="PDB" id="1JV6">
    <property type="method" value="X-ray"/>
    <property type="resolution" value="2.00 A"/>
    <property type="chains" value="A=14-262"/>
</dbReference>
<dbReference type="PDB" id="1JV7">
    <property type="method" value="X-ray"/>
    <property type="resolution" value="2.25 A"/>
    <property type="chains" value="A=14-262"/>
</dbReference>
<dbReference type="PDB" id="1KG8">
    <property type="method" value="X-ray"/>
    <property type="resolution" value="2.00 A"/>
    <property type="chains" value="A=14-244"/>
</dbReference>
<dbReference type="PDB" id="1KG9">
    <property type="method" value="X-ray"/>
    <property type="resolution" value="1.81 A"/>
    <property type="chains" value="A=14-244"/>
</dbReference>
<dbReference type="PDB" id="1KGB">
    <property type="method" value="X-ray"/>
    <property type="resolution" value="1.65 A"/>
    <property type="chains" value="A=14-244"/>
</dbReference>
<dbReference type="PDB" id="1KME">
    <property type="method" value="X-ray"/>
    <property type="resolution" value="2.00 A"/>
    <property type="chains" value="A/B=14-244"/>
</dbReference>
<dbReference type="PDB" id="1L0M">
    <property type="method" value="NMR"/>
    <property type="chains" value="A=20-231"/>
</dbReference>
<dbReference type="PDB" id="1M0K">
    <property type="method" value="X-ray"/>
    <property type="resolution" value="1.43 A"/>
    <property type="chains" value="A=1-262"/>
</dbReference>
<dbReference type="PDB" id="1M0L">
    <property type="method" value="X-ray"/>
    <property type="resolution" value="1.47 A"/>
    <property type="chains" value="A=1-262"/>
</dbReference>
<dbReference type="PDB" id="1M0M">
    <property type="method" value="X-ray"/>
    <property type="resolution" value="1.43 A"/>
    <property type="chains" value="A=1-262"/>
</dbReference>
<dbReference type="PDB" id="1MGY">
    <property type="method" value="X-ray"/>
    <property type="resolution" value="2.00 A"/>
    <property type="chains" value="A=14-262"/>
</dbReference>
<dbReference type="PDB" id="1O0A">
    <property type="method" value="X-ray"/>
    <property type="resolution" value="1.62 A"/>
    <property type="chains" value="A=14-262"/>
</dbReference>
<dbReference type="PDB" id="1P8H">
    <property type="method" value="X-ray"/>
    <property type="resolution" value="1.52 A"/>
    <property type="chains" value="A=14-262"/>
</dbReference>
<dbReference type="PDB" id="1P8I">
    <property type="method" value="X-ray"/>
    <property type="resolution" value="1.86 A"/>
    <property type="chains" value="A=14-262"/>
</dbReference>
<dbReference type="PDB" id="1P8U">
    <property type="method" value="X-ray"/>
    <property type="resolution" value="1.62 A"/>
    <property type="chains" value="A=14-262"/>
</dbReference>
<dbReference type="PDB" id="1PXR">
    <property type="method" value="X-ray"/>
    <property type="resolution" value="1.70 A"/>
    <property type="chains" value="A/B=14-262"/>
</dbReference>
<dbReference type="PDB" id="1PXS">
    <property type="method" value="X-ray"/>
    <property type="resolution" value="2.20 A"/>
    <property type="chains" value="A/B=14-262"/>
</dbReference>
<dbReference type="PDB" id="1PY6">
    <property type="method" value="X-ray"/>
    <property type="resolution" value="1.80 A"/>
    <property type="chains" value="A/B=14-262"/>
</dbReference>
<dbReference type="PDB" id="1Q5I">
    <property type="method" value="X-ray"/>
    <property type="resolution" value="2.30 A"/>
    <property type="chains" value="A/B=14-262"/>
</dbReference>
<dbReference type="PDB" id="1Q5J">
    <property type="method" value="X-ray"/>
    <property type="resolution" value="2.10 A"/>
    <property type="chains" value="A/B=14-262"/>
</dbReference>
<dbReference type="PDB" id="1QHJ">
    <property type="method" value="X-ray"/>
    <property type="resolution" value="1.90 A"/>
    <property type="chains" value="A=14-261"/>
</dbReference>
<dbReference type="PDB" id="1QKO">
    <property type="method" value="X-ray"/>
    <property type="resolution" value="2.10 A"/>
    <property type="chains" value="A=14-261"/>
</dbReference>
<dbReference type="PDB" id="1QKP">
    <property type="method" value="X-ray"/>
    <property type="resolution" value="2.10 A"/>
    <property type="chains" value="A=14-261"/>
</dbReference>
<dbReference type="PDB" id="1QM8">
    <property type="method" value="X-ray"/>
    <property type="resolution" value="2.50 A"/>
    <property type="chains" value="A=14-261"/>
</dbReference>
<dbReference type="PDB" id="1R2N">
    <property type="method" value="NMR"/>
    <property type="chains" value="A=14-262"/>
</dbReference>
<dbReference type="PDB" id="1R84">
    <property type="method" value="NMR"/>
    <property type="chains" value="A=14-245"/>
</dbReference>
<dbReference type="PDB" id="1S51">
    <property type="method" value="X-ray"/>
    <property type="resolution" value="2.00 A"/>
    <property type="chains" value="A/B=18-244"/>
</dbReference>
<dbReference type="PDB" id="1S52">
    <property type="method" value="X-ray"/>
    <property type="resolution" value="2.30 A"/>
    <property type="chains" value="A/B=18-244"/>
</dbReference>
<dbReference type="PDB" id="1S53">
    <property type="method" value="X-ray"/>
    <property type="resolution" value="2.00 A"/>
    <property type="chains" value="A/B=18-244"/>
</dbReference>
<dbReference type="PDB" id="1S54">
    <property type="method" value="X-ray"/>
    <property type="resolution" value="2.20 A"/>
    <property type="chains" value="A/B=18-244"/>
</dbReference>
<dbReference type="PDB" id="1S8J">
    <property type="method" value="X-ray"/>
    <property type="resolution" value="2.30 A"/>
    <property type="chains" value="A=14-262"/>
</dbReference>
<dbReference type="PDB" id="1S8L">
    <property type="method" value="X-ray"/>
    <property type="resolution" value="2.30 A"/>
    <property type="chains" value="A=14-262"/>
</dbReference>
<dbReference type="PDB" id="1TN0">
    <property type="method" value="X-ray"/>
    <property type="resolution" value="2.50 A"/>
    <property type="chains" value="A/B=14-262"/>
</dbReference>
<dbReference type="PDB" id="1TN5">
    <property type="method" value="X-ray"/>
    <property type="resolution" value="2.20 A"/>
    <property type="chains" value="A/B=14-262"/>
</dbReference>
<dbReference type="PDB" id="1UCQ">
    <property type="method" value="X-ray"/>
    <property type="resolution" value="2.40 A"/>
    <property type="chains" value="A=14-262"/>
</dbReference>
<dbReference type="PDB" id="1VJM">
    <property type="method" value="X-ray"/>
    <property type="resolution" value="2.30 A"/>
    <property type="chains" value="A=14-262"/>
</dbReference>
<dbReference type="PDB" id="1X0I">
    <property type="method" value="X-ray"/>
    <property type="resolution" value="2.30 A"/>
    <property type="chains" value="1=14-261"/>
</dbReference>
<dbReference type="PDB" id="1X0K">
    <property type="method" value="X-ray"/>
    <property type="resolution" value="2.60 A"/>
    <property type="chains" value="1=14-261"/>
</dbReference>
<dbReference type="PDB" id="1X0S">
    <property type="method" value="X-ray"/>
    <property type="resolution" value="2.50 A"/>
    <property type="chains" value="A=14-261"/>
</dbReference>
<dbReference type="PDB" id="1XJI">
    <property type="method" value="X-ray"/>
    <property type="resolution" value="2.20 A"/>
    <property type="chains" value="A=15-261"/>
</dbReference>
<dbReference type="PDB" id="2AT9">
    <property type="method" value="EM"/>
    <property type="resolution" value="3.00 A"/>
    <property type="chains" value="A=15-261"/>
</dbReference>
<dbReference type="PDB" id="2BRD">
    <property type="method" value="X-ray"/>
    <property type="resolution" value="3.50 A"/>
    <property type="chains" value="A=15-261"/>
</dbReference>
<dbReference type="PDB" id="2I1X">
    <property type="method" value="X-ray"/>
    <property type="resolution" value="2.00 A"/>
    <property type="chains" value="A=14-262"/>
</dbReference>
<dbReference type="PDB" id="2I20">
    <property type="method" value="X-ray"/>
    <property type="resolution" value="2.08 A"/>
    <property type="chains" value="A=14-262"/>
</dbReference>
<dbReference type="PDB" id="2I21">
    <property type="method" value="X-ray"/>
    <property type="resolution" value="1.84 A"/>
    <property type="chains" value="A=14-262"/>
</dbReference>
<dbReference type="PDB" id="2NTU">
    <property type="method" value="X-ray"/>
    <property type="resolution" value="1.53 A"/>
    <property type="chains" value="A=14-262"/>
</dbReference>
<dbReference type="PDB" id="2NTW">
    <property type="method" value="X-ray"/>
    <property type="resolution" value="1.53 A"/>
    <property type="chains" value="A=14-262"/>
</dbReference>
<dbReference type="PDB" id="2WJK">
    <property type="method" value="X-ray"/>
    <property type="resolution" value="2.30 A"/>
    <property type="chains" value="A=14-262"/>
</dbReference>
<dbReference type="PDB" id="2WJL">
    <property type="method" value="X-ray"/>
    <property type="resolution" value="2.15 A"/>
    <property type="chains" value="A=14-262"/>
</dbReference>
<dbReference type="PDB" id="2ZFE">
    <property type="method" value="X-ray"/>
    <property type="resolution" value="2.50 A"/>
    <property type="chains" value="A=1-262"/>
</dbReference>
<dbReference type="PDB" id="2ZZL">
    <property type="method" value="X-ray"/>
    <property type="resolution" value="2.03 A"/>
    <property type="chains" value="A=1-262"/>
</dbReference>
<dbReference type="PDB" id="3COC">
    <property type="method" value="X-ray"/>
    <property type="resolution" value="2.31 A"/>
    <property type="chains" value="A/B=14-262"/>
</dbReference>
<dbReference type="PDB" id="3COD">
    <property type="method" value="X-ray"/>
    <property type="resolution" value="2.70 A"/>
    <property type="chains" value="A/B=14-262"/>
</dbReference>
<dbReference type="PDB" id="3HAN">
    <property type="method" value="X-ray"/>
    <property type="resolution" value="2.75 A"/>
    <property type="chains" value="A=14-262"/>
</dbReference>
<dbReference type="PDB" id="3HAO">
    <property type="method" value="X-ray"/>
    <property type="resolution" value="2.49 A"/>
    <property type="chains" value="A/B=14-262"/>
</dbReference>
<dbReference type="PDB" id="3HAP">
    <property type="method" value="X-ray"/>
    <property type="resolution" value="1.60 A"/>
    <property type="chains" value="A=14-262"/>
</dbReference>
<dbReference type="PDB" id="3HAQ">
    <property type="method" value="X-ray"/>
    <property type="resolution" value="2.30 A"/>
    <property type="chains" value="A=14-262"/>
</dbReference>
<dbReference type="PDB" id="3HAR">
    <property type="method" value="X-ray"/>
    <property type="resolution" value="1.70 A"/>
    <property type="chains" value="A=14-262"/>
</dbReference>
<dbReference type="PDB" id="3HAS">
    <property type="method" value="X-ray"/>
    <property type="resolution" value="1.90 A"/>
    <property type="chains" value="A=14-262"/>
</dbReference>
<dbReference type="PDB" id="3MBV">
    <property type="method" value="X-ray"/>
    <property type="resolution" value="2.00 A"/>
    <property type="chains" value="A=14-261"/>
</dbReference>
<dbReference type="PDB" id="3NS0">
    <property type="method" value="X-ray"/>
    <property type="resolution" value="1.78 A"/>
    <property type="chains" value="A=14-261"/>
</dbReference>
<dbReference type="PDB" id="3NSB">
    <property type="method" value="X-ray"/>
    <property type="resolution" value="1.78 A"/>
    <property type="chains" value="A=14-261"/>
</dbReference>
<dbReference type="PDB" id="3T45">
    <property type="method" value="X-ray"/>
    <property type="resolution" value="3.01 A"/>
    <property type="chains" value="A/B/C=20-244"/>
</dbReference>
<dbReference type="PDB" id="3UTV">
    <property type="method" value="X-ray"/>
    <property type="resolution" value="2.06 A"/>
    <property type="chains" value="A=14-262"/>
</dbReference>
<dbReference type="PDB" id="3UTW">
    <property type="method" value="X-ray"/>
    <property type="resolution" value="2.40 A"/>
    <property type="chains" value="A=14-262"/>
</dbReference>
<dbReference type="PDB" id="3UTX">
    <property type="method" value="X-ray"/>
    <property type="resolution" value="2.47 A"/>
    <property type="chains" value="A/B=14-262"/>
</dbReference>
<dbReference type="PDB" id="3UTY">
    <property type="method" value="X-ray"/>
    <property type="resolution" value="2.37 A"/>
    <property type="chains" value="A/B=14-262"/>
</dbReference>
<dbReference type="PDB" id="3VHZ">
    <property type="method" value="X-ray"/>
    <property type="resolution" value="2.30 A"/>
    <property type="chains" value="A=1-262"/>
</dbReference>
<dbReference type="PDB" id="3VI0">
    <property type="method" value="X-ray"/>
    <property type="resolution" value="2.30 A"/>
    <property type="chains" value="A=1-262"/>
</dbReference>
<dbReference type="PDB" id="4FPD">
    <property type="method" value="X-ray"/>
    <property type="resolution" value="2.65 A"/>
    <property type="chains" value="A=1-262"/>
</dbReference>
<dbReference type="PDB" id="4HWL">
    <property type="method" value="X-ray"/>
    <property type="resolution" value="2.00 A"/>
    <property type="chains" value="A/B=1-262"/>
</dbReference>
<dbReference type="PDB" id="4HYX">
    <property type="method" value="X-ray"/>
    <property type="resolution" value="1.99 A"/>
    <property type="chains" value="A/B=1-262"/>
</dbReference>
<dbReference type="PDB" id="4MD1">
    <property type="method" value="X-ray"/>
    <property type="resolution" value="1.73 A"/>
    <property type="chains" value="A=14-261"/>
</dbReference>
<dbReference type="PDB" id="4MD2">
    <property type="method" value="X-ray"/>
    <property type="resolution" value="1.73 A"/>
    <property type="chains" value="A=14-261"/>
</dbReference>
<dbReference type="PDB" id="4OV0">
    <property type="method" value="X-ray"/>
    <property type="resolution" value="2.00 A"/>
    <property type="chains" value="A=14-262"/>
</dbReference>
<dbReference type="PDB" id="4X31">
    <property type="method" value="X-ray"/>
    <property type="resolution" value="2.40 A"/>
    <property type="chains" value="A=18-246"/>
</dbReference>
<dbReference type="PDB" id="4X32">
    <property type="method" value="X-ray"/>
    <property type="resolution" value="1.90 A"/>
    <property type="chains" value="A=18-245"/>
</dbReference>
<dbReference type="PDB" id="4XXJ">
    <property type="method" value="X-ray"/>
    <property type="resolution" value="1.90 A"/>
    <property type="chains" value="A/B/C=14-262"/>
</dbReference>
<dbReference type="PDB" id="5A44">
    <property type="method" value="X-ray"/>
    <property type="resolution" value="2.29 A"/>
    <property type="chains" value="A=14-261"/>
</dbReference>
<dbReference type="PDB" id="5A45">
    <property type="method" value="X-ray"/>
    <property type="resolution" value="2.57 A"/>
    <property type="chains" value="A=14-261"/>
</dbReference>
<dbReference type="PDB" id="5B34">
    <property type="method" value="X-ray"/>
    <property type="resolution" value="2.10 A"/>
    <property type="chains" value="A=14-262"/>
</dbReference>
<dbReference type="PDB" id="5B35">
    <property type="method" value="X-ray"/>
    <property type="resolution" value="2.35 A"/>
    <property type="chains" value="A=14-262"/>
</dbReference>
<dbReference type="PDB" id="5B6V">
    <property type="method" value="X-ray"/>
    <property type="resolution" value="2.00 A"/>
    <property type="chains" value="A=14-261"/>
</dbReference>
<dbReference type="PDB" id="5B6W">
    <property type="method" value="X-ray"/>
    <property type="resolution" value="2.10 A"/>
    <property type="chains" value="A=14-261"/>
</dbReference>
<dbReference type="PDB" id="5B6X">
    <property type="method" value="X-ray"/>
    <property type="resolution" value="2.10 A"/>
    <property type="chains" value="A=14-261"/>
</dbReference>
<dbReference type="PDB" id="5B6Y">
    <property type="method" value="X-ray"/>
    <property type="resolution" value="2.10 A"/>
    <property type="chains" value="A=14-261"/>
</dbReference>
<dbReference type="PDB" id="5B6Z">
    <property type="method" value="X-ray"/>
    <property type="resolution" value="2.10 A"/>
    <property type="chains" value="A=14-261"/>
</dbReference>
<dbReference type="PDB" id="5BR2">
    <property type="method" value="X-ray"/>
    <property type="resolution" value="1.80 A"/>
    <property type="chains" value="A=14-262"/>
</dbReference>
<dbReference type="PDB" id="5BR5">
    <property type="method" value="X-ray"/>
    <property type="resolution" value="2.00 A"/>
    <property type="chains" value="A=14-262"/>
</dbReference>
<dbReference type="PDB" id="5H2H">
    <property type="method" value="X-ray"/>
    <property type="resolution" value="2.10 A"/>
    <property type="chains" value="A=14-261"/>
</dbReference>
<dbReference type="PDB" id="5H2I">
    <property type="method" value="X-ray"/>
    <property type="resolution" value="2.10 A"/>
    <property type="chains" value="A=14-261"/>
</dbReference>
<dbReference type="PDB" id="5H2J">
    <property type="method" value="X-ray"/>
    <property type="resolution" value="2.10 A"/>
    <property type="chains" value="A=14-261"/>
</dbReference>
<dbReference type="PDB" id="5H2K">
    <property type="method" value="X-ray"/>
    <property type="resolution" value="2.10 A"/>
    <property type="chains" value="A=14-261"/>
</dbReference>
<dbReference type="PDB" id="5H2L">
    <property type="method" value="X-ray"/>
    <property type="resolution" value="2.10 A"/>
    <property type="chains" value="A=14-261"/>
</dbReference>
<dbReference type="PDB" id="5H2M">
    <property type="method" value="X-ray"/>
    <property type="resolution" value="2.10 A"/>
    <property type="chains" value="A=14-261"/>
</dbReference>
<dbReference type="PDB" id="5H2N">
    <property type="method" value="X-ray"/>
    <property type="resolution" value="2.10 A"/>
    <property type="chains" value="A=14-261"/>
</dbReference>
<dbReference type="PDB" id="5H2O">
    <property type="method" value="X-ray"/>
    <property type="resolution" value="2.10 A"/>
    <property type="chains" value="A=14-261"/>
</dbReference>
<dbReference type="PDB" id="5H2P">
    <property type="method" value="X-ray"/>
    <property type="resolution" value="2.10 A"/>
    <property type="chains" value="A=14-261"/>
</dbReference>
<dbReference type="PDB" id="5J7A">
    <property type="method" value="X-ray"/>
    <property type="resolution" value="2.30 A"/>
    <property type="chains" value="A=18-244"/>
</dbReference>
<dbReference type="PDB" id="5VN7">
    <property type="method" value="X-ray"/>
    <property type="resolution" value="2.70 A"/>
    <property type="chains" value="A/B=1-262"/>
</dbReference>
<dbReference type="PDB" id="5VN9">
    <property type="method" value="X-ray"/>
    <property type="resolution" value="2.59 A"/>
    <property type="chains" value="A/B=1-262"/>
</dbReference>
<dbReference type="PDB" id="5ZIL">
    <property type="method" value="X-ray"/>
    <property type="resolution" value="1.29 A"/>
    <property type="chains" value="A=18-246"/>
</dbReference>
<dbReference type="PDB" id="5ZIM">
    <property type="method" value="X-ray"/>
    <property type="resolution" value="1.25 A"/>
    <property type="chains" value="A=18-245"/>
</dbReference>
<dbReference type="PDB" id="5ZIN">
    <property type="method" value="X-ray"/>
    <property type="resolution" value="1.27 A"/>
    <property type="chains" value="A=18-245"/>
</dbReference>
<dbReference type="PDB" id="6G7H">
    <property type="method" value="X-ray"/>
    <property type="resolution" value="1.50 A"/>
    <property type="chains" value="A=14-261"/>
</dbReference>
<dbReference type="PDB" id="6G7I">
    <property type="method" value="X-ray"/>
    <property type="resolution" value="1.90 A"/>
    <property type="chains" value="A=1-262"/>
</dbReference>
<dbReference type="PDB" id="6G7J">
    <property type="method" value="X-ray"/>
    <property type="resolution" value="1.90 A"/>
    <property type="chains" value="A=1-262"/>
</dbReference>
<dbReference type="PDB" id="6G7K">
    <property type="method" value="X-ray"/>
    <property type="resolution" value="1.90 A"/>
    <property type="chains" value="A=1-262"/>
</dbReference>
<dbReference type="PDB" id="6G7L">
    <property type="method" value="X-ray"/>
    <property type="resolution" value="1.90 A"/>
    <property type="chains" value="A=1-262"/>
</dbReference>
<dbReference type="PDB" id="6GA1">
    <property type="method" value="X-ray"/>
    <property type="resolution" value="1.70 A"/>
    <property type="chains" value="A=14-262"/>
</dbReference>
<dbReference type="PDB" id="6GA2">
    <property type="method" value="X-ray"/>
    <property type="resolution" value="1.80 A"/>
    <property type="chains" value="A=14-262"/>
</dbReference>
<dbReference type="PDB" id="6GA3">
    <property type="method" value="X-ray"/>
    <property type="resolution" value="2.10 A"/>
    <property type="chains" value="A=14-262"/>
</dbReference>
<dbReference type="PDB" id="6GA4">
    <property type="method" value="X-ray"/>
    <property type="resolution" value="1.80 A"/>
    <property type="chains" value="A=14-262"/>
</dbReference>
<dbReference type="PDB" id="6GA5">
    <property type="method" value="X-ray"/>
    <property type="resolution" value="1.90 A"/>
    <property type="chains" value="A=14-262"/>
</dbReference>
<dbReference type="PDB" id="6GA6">
    <property type="method" value="X-ray"/>
    <property type="resolution" value="1.80 A"/>
    <property type="chains" value="A=14-262"/>
</dbReference>
<dbReference type="PDB" id="6GA7">
    <property type="method" value="X-ray"/>
    <property type="resolution" value="1.80 A"/>
    <property type="chains" value="A=14-247"/>
</dbReference>
<dbReference type="PDB" id="6GA8">
    <property type="method" value="X-ray"/>
    <property type="resolution" value="1.80 A"/>
    <property type="chains" value="A=14-262"/>
</dbReference>
<dbReference type="PDB" id="6GA9">
    <property type="method" value="X-ray"/>
    <property type="resolution" value="1.80 A"/>
    <property type="chains" value="A=14-262"/>
</dbReference>
<dbReference type="PDB" id="6GAA">
    <property type="method" value="X-ray"/>
    <property type="resolution" value="1.80 A"/>
    <property type="chains" value="A=14-262"/>
</dbReference>
<dbReference type="PDB" id="6GAB">
    <property type="method" value="X-ray"/>
    <property type="resolution" value="1.80 A"/>
    <property type="chains" value="A=14-262"/>
</dbReference>
<dbReference type="PDB" id="6GAC">
    <property type="method" value="X-ray"/>
    <property type="resolution" value="1.80 A"/>
    <property type="chains" value="A=14-262"/>
</dbReference>
<dbReference type="PDB" id="6GAD">
    <property type="method" value="X-ray"/>
    <property type="resolution" value="1.80 A"/>
    <property type="chains" value="A=14-262"/>
</dbReference>
<dbReference type="PDB" id="6GAE">
    <property type="method" value="X-ray"/>
    <property type="resolution" value="1.80 A"/>
    <property type="chains" value="A=14-262"/>
</dbReference>
<dbReference type="PDB" id="6GAF">
    <property type="method" value="X-ray"/>
    <property type="resolution" value="1.80 A"/>
    <property type="chains" value="A=14-262"/>
</dbReference>
<dbReference type="PDB" id="6GAG">
    <property type="method" value="X-ray"/>
    <property type="resolution" value="1.80 A"/>
    <property type="chains" value="A=14-262"/>
</dbReference>
<dbReference type="PDB" id="6GAH">
    <property type="method" value="X-ray"/>
    <property type="resolution" value="1.80 A"/>
    <property type="chains" value="A=14-262"/>
</dbReference>
<dbReference type="PDB" id="6GAI">
    <property type="method" value="X-ray"/>
    <property type="resolution" value="1.80 A"/>
    <property type="chains" value="A=14-262"/>
</dbReference>
<dbReference type="PDB" id="6RMK">
    <property type="method" value="X-ray"/>
    <property type="resolution" value="1.80 A"/>
    <property type="chains" value="A=17-247"/>
</dbReference>
<dbReference type="PDB" id="6RNJ">
    <property type="method" value="X-ray"/>
    <property type="resolution" value="2.60 A"/>
    <property type="chains" value="A=18-246"/>
</dbReference>
<dbReference type="PDB" id="6RPH">
    <property type="method" value="X-ray"/>
    <property type="resolution" value="2.60 A"/>
    <property type="chains" value="A=1-240"/>
</dbReference>
<dbReference type="PDB" id="6RQO">
    <property type="method" value="X-ray"/>
    <property type="resolution" value="2.00 A"/>
    <property type="chains" value="A=18-240"/>
</dbReference>
<dbReference type="PDB" id="6RQP">
    <property type="method" value="X-ray"/>
    <property type="resolution" value="1.80 A"/>
    <property type="chains" value="A=18-246"/>
</dbReference>
<dbReference type="PDB" id="7Q35">
    <property type="method" value="X-ray"/>
    <property type="resolution" value="2.00 A"/>
    <property type="chains" value="A=14-262"/>
</dbReference>
<dbReference type="PDB" id="7Q38">
    <property type="method" value="X-ray"/>
    <property type="resolution" value="1.65 A"/>
    <property type="chains" value="A=14-262"/>
</dbReference>
<dbReference type="PDB" id="7VSO">
    <property type="method" value="X-ray"/>
    <property type="resolution" value="2.35 A"/>
    <property type="chains" value="A=14-262"/>
</dbReference>
<dbReference type="PDB" id="7XJC">
    <property type="method" value="X-ray"/>
    <property type="resolution" value="1.33 A"/>
    <property type="chains" value="A=18-247"/>
</dbReference>
<dbReference type="PDB" id="7XJD">
    <property type="method" value="X-ray"/>
    <property type="resolution" value="1.33 A"/>
    <property type="chains" value="A=18-247"/>
</dbReference>
<dbReference type="PDB" id="7XJE">
    <property type="method" value="X-ray"/>
    <property type="resolution" value="1.33 A"/>
    <property type="chains" value="A=18-247"/>
</dbReference>
<dbReference type="PDB" id="7Z09">
    <property type="method" value="X-ray"/>
    <property type="resolution" value="1.05 A"/>
    <property type="chains" value="A=14-261"/>
</dbReference>
<dbReference type="PDB" id="7Z0A">
    <property type="method" value="X-ray"/>
    <property type="resolution" value="1.22 A"/>
    <property type="chains" value="A=14-261"/>
</dbReference>
<dbReference type="PDB" id="7Z0C">
    <property type="method" value="X-ray"/>
    <property type="resolution" value="1.53 A"/>
    <property type="chains" value="A=14-261"/>
</dbReference>
<dbReference type="PDB" id="7Z0D">
    <property type="method" value="X-ray"/>
    <property type="resolution" value="1.20 A"/>
    <property type="chains" value="A=14-261"/>
</dbReference>
<dbReference type="PDB" id="7Z0E">
    <property type="method" value="X-ray"/>
    <property type="resolution" value="1.22 A"/>
    <property type="chains" value="P=14-261"/>
</dbReference>
<dbReference type="PDB" id="9F9B">
    <property type="method" value="X-ray"/>
    <property type="resolution" value="2.00 A"/>
    <property type="chains" value="A=18-247"/>
</dbReference>
<dbReference type="PDB" id="9F9C">
    <property type="method" value="X-ray"/>
    <property type="resolution" value="2.00 A"/>
    <property type="chains" value="A=18-247"/>
</dbReference>
<dbReference type="PDB" id="9F9D">
    <property type="method" value="X-ray"/>
    <property type="resolution" value="1.70 A"/>
    <property type="chains" value="A=18-247"/>
</dbReference>
<dbReference type="PDB" id="9F9E">
    <property type="method" value="X-ray"/>
    <property type="resolution" value="1.80 A"/>
    <property type="chains" value="A=18-247"/>
</dbReference>
<dbReference type="PDB" id="9F9F">
    <property type="method" value="X-ray"/>
    <property type="resolution" value="1.80 A"/>
    <property type="chains" value="A=18-247"/>
</dbReference>
<dbReference type="PDB" id="9F9G">
    <property type="method" value="X-ray"/>
    <property type="resolution" value="1.44 A"/>
    <property type="chains" value="A=17-247"/>
</dbReference>
<dbReference type="PDB" id="9F9H">
    <property type="method" value="X-ray"/>
    <property type="resolution" value="1.66 A"/>
    <property type="chains" value="A=18-247"/>
</dbReference>
<dbReference type="PDB" id="9F9I">
    <property type="method" value="X-ray"/>
    <property type="resolution" value="1.60 A"/>
    <property type="chains" value="A=18-247"/>
</dbReference>
<dbReference type="PDB" id="9F9J">
    <property type="method" value="X-ray"/>
    <property type="resolution" value="1.76 A"/>
    <property type="chains" value="A=18-247"/>
</dbReference>
<dbReference type="PDBsum" id="1AP9"/>
<dbReference type="PDBsum" id="1AT9"/>
<dbReference type="PDBsum" id="1BCT"/>
<dbReference type="PDBsum" id="1BHA"/>
<dbReference type="PDBsum" id="1BHB"/>
<dbReference type="PDBsum" id="1BM1"/>
<dbReference type="PDBsum" id="1BRD"/>
<dbReference type="PDBsum" id="1BRR"/>
<dbReference type="PDBsum" id="1BRX"/>
<dbReference type="PDBsum" id="1C3W"/>
<dbReference type="PDBsum" id="1C8R"/>
<dbReference type="PDBsum" id="1C8S"/>
<dbReference type="PDBsum" id="1CWQ"/>
<dbReference type="PDBsum" id="1DZE"/>
<dbReference type="PDBsum" id="1E0P"/>
<dbReference type="PDBsum" id="1F4Z"/>
<dbReference type="PDBsum" id="1F50"/>
<dbReference type="PDBsum" id="1FBB"/>
<dbReference type="PDBsum" id="1FBK"/>
<dbReference type="PDBsum" id="1IW6"/>
<dbReference type="PDBsum" id="1IW9"/>
<dbReference type="PDBsum" id="1IXF"/>
<dbReference type="PDBsum" id="1JV6"/>
<dbReference type="PDBsum" id="1JV7"/>
<dbReference type="PDBsum" id="1KG8"/>
<dbReference type="PDBsum" id="1KG9"/>
<dbReference type="PDBsum" id="1KGB"/>
<dbReference type="PDBsum" id="1KME"/>
<dbReference type="PDBsum" id="1L0M"/>
<dbReference type="PDBsum" id="1M0K"/>
<dbReference type="PDBsum" id="1M0L"/>
<dbReference type="PDBsum" id="1M0M"/>
<dbReference type="PDBsum" id="1MGY"/>
<dbReference type="PDBsum" id="1O0A"/>
<dbReference type="PDBsum" id="1P8H"/>
<dbReference type="PDBsum" id="1P8I"/>
<dbReference type="PDBsum" id="1P8U"/>
<dbReference type="PDBsum" id="1PXR"/>
<dbReference type="PDBsum" id="1PXS"/>
<dbReference type="PDBsum" id="1PY6"/>
<dbReference type="PDBsum" id="1Q5I"/>
<dbReference type="PDBsum" id="1Q5J"/>
<dbReference type="PDBsum" id="1QHJ"/>
<dbReference type="PDBsum" id="1QKO"/>
<dbReference type="PDBsum" id="1QKP"/>
<dbReference type="PDBsum" id="1QM8"/>
<dbReference type="PDBsum" id="1R2N"/>
<dbReference type="PDBsum" id="1R84"/>
<dbReference type="PDBsum" id="1S51"/>
<dbReference type="PDBsum" id="1S52"/>
<dbReference type="PDBsum" id="1S53"/>
<dbReference type="PDBsum" id="1S54"/>
<dbReference type="PDBsum" id="1S8J"/>
<dbReference type="PDBsum" id="1S8L"/>
<dbReference type="PDBsum" id="1TN0"/>
<dbReference type="PDBsum" id="1TN5"/>
<dbReference type="PDBsum" id="1UCQ"/>
<dbReference type="PDBsum" id="1VJM"/>
<dbReference type="PDBsum" id="1X0I"/>
<dbReference type="PDBsum" id="1X0K"/>
<dbReference type="PDBsum" id="1X0S"/>
<dbReference type="PDBsum" id="1XJI"/>
<dbReference type="PDBsum" id="2AT9"/>
<dbReference type="PDBsum" id="2BRD"/>
<dbReference type="PDBsum" id="2I1X"/>
<dbReference type="PDBsum" id="2I20"/>
<dbReference type="PDBsum" id="2I21"/>
<dbReference type="PDBsum" id="2NTU"/>
<dbReference type="PDBsum" id="2NTW"/>
<dbReference type="PDBsum" id="2WJK"/>
<dbReference type="PDBsum" id="2WJL"/>
<dbReference type="PDBsum" id="2ZFE"/>
<dbReference type="PDBsum" id="2ZZL"/>
<dbReference type="PDBsum" id="3COC"/>
<dbReference type="PDBsum" id="3COD"/>
<dbReference type="PDBsum" id="3HAN"/>
<dbReference type="PDBsum" id="3HAO"/>
<dbReference type="PDBsum" id="3HAP"/>
<dbReference type="PDBsum" id="3HAQ"/>
<dbReference type="PDBsum" id="3HAR"/>
<dbReference type="PDBsum" id="3HAS"/>
<dbReference type="PDBsum" id="3MBV"/>
<dbReference type="PDBsum" id="3NS0"/>
<dbReference type="PDBsum" id="3NSB"/>
<dbReference type="PDBsum" id="3T45"/>
<dbReference type="PDBsum" id="3UTV"/>
<dbReference type="PDBsum" id="3UTW"/>
<dbReference type="PDBsum" id="3UTX"/>
<dbReference type="PDBsum" id="3UTY"/>
<dbReference type="PDBsum" id="3VHZ"/>
<dbReference type="PDBsum" id="3VI0"/>
<dbReference type="PDBsum" id="4FPD"/>
<dbReference type="PDBsum" id="4HWL"/>
<dbReference type="PDBsum" id="4HYX"/>
<dbReference type="PDBsum" id="4MD1"/>
<dbReference type="PDBsum" id="4MD2"/>
<dbReference type="PDBsum" id="4OV0"/>
<dbReference type="PDBsum" id="4X31"/>
<dbReference type="PDBsum" id="4X32"/>
<dbReference type="PDBsum" id="4XXJ"/>
<dbReference type="PDBsum" id="5A44"/>
<dbReference type="PDBsum" id="5A45"/>
<dbReference type="PDBsum" id="5B34"/>
<dbReference type="PDBsum" id="5B35"/>
<dbReference type="PDBsum" id="5B6V"/>
<dbReference type="PDBsum" id="5B6W"/>
<dbReference type="PDBsum" id="5B6X"/>
<dbReference type="PDBsum" id="5B6Y"/>
<dbReference type="PDBsum" id="5B6Z"/>
<dbReference type="PDBsum" id="5BR2"/>
<dbReference type="PDBsum" id="5BR5"/>
<dbReference type="PDBsum" id="5H2H"/>
<dbReference type="PDBsum" id="5H2I"/>
<dbReference type="PDBsum" id="5H2J"/>
<dbReference type="PDBsum" id="5H2K"/>
<dbReference type="PDBsum" id="5H2L"/>
<dbReference type="PDBsum" id="5H2M"/>
<dbReference type="PDBsum" id="5H2N"/>
<dbReference type="PDBsum" id="5H2O"/>
<dbReference type="PDBsum" id="5H2P"/>
<dbReference type="PDBsum" id="5J7A"/>
<dbReference type="PDBsum" id="5VN7"/>
<dbReference type="PDBsum" id="5VN9"/>
<dbReference type="PDBsum" id="5ZIL"/>
<dbReference type="PDBsum" id="5ZIM"/>
<dbReference type="PDBsum" id="5ZIN"/>
<dbReference type="PDBsum" id="6G7H"/>
<dbReference type="PDBsum" id="6G7I"/>
<dbReference type="PDBsum" id="6G7J"/>
<dbReference type="PDBsum" id="6G7K"/>
<dbReference type="PDBsum" id="6G7L"/>
<dbReference type="PDBsum" id="6GA1"/>
<dbReference type="PDBsum" id="6GA2"/>
<dbReference type="PDBsum" id="6GA3"/>
<dbReference type="PDBsum" id="6GA4"/>
<dbReference type="PDBsum" id="6GA5"/>
<dbReference type="PDBsum" id="6GA6"/>
<dbReference type="PDBsum" id="6GA7"/>
<dbReference type="PDBsum" id="6GA8"/>
<dbReference type="PDBsum" id="6GA9"/>
<dbReference type="PDBsum" id="6GAA"/>
<dbReference type="PDBsum" id="6GAB"/>
<dbReference type="PDBsum" id="6GAC"/>
<dbReference type="PDBsum" id="6GAD"/>
<dbReference type="PDBsum" id="6GAE"/>
<dbReference type="PDBsum" id="6GAF"/>
<dbReference type="PDBsum" id="6GAG"/>
<dbReference type="PDBsum" id="6GAH"/>
<dbReference type="PDBsum" id="6GAI"/>
<dbReference type="PDBsum" id="6RMK"/>
<dbReference type="PDBsum" id="6RNJ"/>
<dbReference type="PDBsum" id="6RPH"/>
<dbReference type="PDBsum" id="6RQO"/>
<dbReference type="PDBsum" id="6RQP"/>
<dbReference type="PDBsum" id="7Q35"/>
<dbReference type="PDBsum" id="7Q38"/>
<dbReference type="PDBsum" id="7VSO"/>
<dbReference type="PDBsum" id="7XJC"/>
<dbReference type="PDBsum" id="7XJD"/>
<dbReference type="PDBsum" id="7XJE"/>
<dbReference type="PDBsum" id="7Z09"/>
<dbReference type="PDBsum" id="7Z0A"/>
<dbReference type="PDBsum" id="7Z0C"/>
<dbReference type="PDBsum" id="7Z0D"/>
<dbReference type="PDBsum" id="7Z0E"/>
<dbReference type="PDBsum" id="9F9B"/>
<dbReference type="PDBsum" id="9F9C"/>
<dbReference type="PDBsum" id="9F9D"/>
<dbReference type="PDBsum" id="9F9E"/>
<dbReference type="PDBsum" id="9F9F"/>
<dbReference type="PDBsum" id="9F9G"/>
<dbReference type="PDBsum" id="9F9H"/>
<dbReference type="PDBsum" id="9F9I"/>
<dbReference type="PDBsum" id="9F9J"/>
<dbReference type="BMRB" id="P02945"/>
<dbReference type="PCDDB" id="P02945"/>
<dbReference type="SASBDB" id="P02945"/>
<dbReference type="SMR" id="P02945"/>
<dbReference type="DIP" id="DIP-59007N"/>
<dbReference type="STRING" id="64091.VNG_1467G"/>
<dbReference type="TCDB" id="3.E.1.1.1">
    <property type="family name" value="the ion-translocating microbial rhodopsin (mr) family"/>
</dbReference>
<dbReference type="MetOSite" id="P02945"/>
<dbReference type="PaxDb" id="64091-VNG_1467G"/>
<dbReference type="KEGG" id="hal:VNG_1467G"/>
<dbReference type="PATRIC" id="fig|64091.14.peg.1122"/>
<dbReference type="HOGENOM" id="CLU_054785_5_1_2"/>
<dbReference type="InParanoid" id="P02945"/>
<dbReference type="OrthoDB" id="186433at2157"/>
<dbReference type="PhylomeDB" id="P02945"/>
<dbReference type="CD-CODE" id="5E466542">
    <property type="entry name" value="Synthetic Condensate 000268"/>
</dbReference>
<dbReference type="EvolutionaryTrace" id="P02945"/>
<dbReference type="Proteomes" id="UP000000554">
    <property type="component" value="Chromosome"/>
</dbReference>
<dbReference type="GO" id="GO:0005886">
    <property type="term" value="C:plasma membrane"/>
    <property type="evidence" value="ECO:0007669"/>
    <property type="project" value="UniProtKB-SubCell"/>
</dbReference>
<dbReference type="GO" id="GO:0015454">
    <property type="term" value="F:light-driven active monoatomic ion transmembrane transporter activity"/>
    <property type="evidence" value="ECO:0000314"/>
    <property type="project" value="FlyBase"/>
</dbReference>
<dbReference type="GO" id="GO:0005216">
    <property type="term" value="F:monoatomic ion channel activity"/>
    <property type="evidence" value="ECO:0007669"/>
    <property type="project" value="InterPro"/>
</dbReference>
<dbReference type="GO" id="GO:0009881">
    <property type="term" value="F:photoreceptor activity"/>
    <property type="evidence" value="ECO:0007669"/>
    <property type="project" value="UniProtKB-KW"/>
</dbReference>
<dbReference type="GO" id="GO:0007602">
    <property type="term" value="P:phototransduction"/>
    <property type="evidence" value="ECO:0000314"/>
    <property type="project" value="FlyBase"/>
</dbReference>
<dbReference type="GO" id="GO:1902600">
    <property type="term" value="P:proton transmembrane transport"/>
    <property type="evidence" value="ECO:0007669"/>
    <property type="project" value="UniProtKB-KW"/>
</dbReference>
<dbReference type="CDD" id="cd15244">
    <property type="entry name" value="7tm_bacteriorhodopsin"/>
    <property type="match status" value="1"/>
</dbReference>
<dbReference type="Gene3D" id="1.20.1070.10">
    <property type="entry name" value="Rhodopsin 7-helix transmembrane proteins"/>
    <property type="match status" value="1"/>
</dbReference>
<dbReference type="InterPro" id="IPR001425">
    <property type="entry name" value="Arc/bac/fun_rhodopsins"/>
</dbReference>
<dbReference type="InterPro" id="IPR018229">
    <property type="entry name" value="Rhodopsin_retinal_BS"/>
</dbReference>
<dbReference type="PANTHER" id="PTHR28286">
    <property type="match status" value="1"/>
</dbReference>
<dbReference type="PANTHER" id="PTHR28286:SF2">
    <property type="entry name" value="BACTERIORHODOPSIN _OPSIN, NOPA (EUROFUNG)"/>
    <property type="match status" value="1"/>
</dbReference>
<dbReference type="Pfam" id="PF01036">
    <property type="entry name" value="Bac_rhodopsin"/>
    <property type="match status" value="1"/>
</dbReference>
<dbReference type="PRINTS" id="PR00251">
    <property type="entry name" value="BACTRLOPSIN"/>
</dbReference>
<dbReference type="SMART" id="SM01021">
    <property type="entry name" value="Bac_rhodopsin"/>
    <property type="match status" value="1"/>
</dbReference>
<dbReference type="SUPFAM" id="SSF81321">
    <property type="entry name" value="Family A G protein-coupled receptor-like"/>
    <property type="match status" value="1"/>
</dbReference>
<dbReference type="PROSITE" id="PS00950">
    <property type="entry name" value="BACTERIAL_OPSIN_1"/>
    <property type="match status" value="1"/>
</dbReference>
<dbReference type="PROSITE" id="PS00327">
    <property type="entry name" value="BACTERIAL_OPSIN_RET"/>
    <property type="match status" value="1"/>
</dbReference>
<keyword id="KW-0002">3D-structure</keyword>
<keyword id="KW-1003">Cell membrane</keyword>
<keyword id="KW-0157">Chromophore</keyword>
<keyword id="KW-0903">Direct protein sequencing</keyword>
<keyword id="KW-0375">Hydrogen ion transport</keyword>
<keyword id="KW-0406">Ion transport</keyword>
<keyword id="KW-0472">Membrane</keyword>
<keyword id="KW-0600">Photoreceptor protein</keyword>
<keyword id="KW-0873">Pyrrolidone carboxylic acid</keyword>
<keyword id="KW-0675">Receptor</keyword>
<keyword id="KW-1185">Reference proteome</keyword>
<keyword id="KW-0681">Retinal protein</keyword>
<keyword id="KW-0716">Sensory transduction</keyword>
<keyword id="KW-0812">Transmembrane</keyword>
<keyword id="KW-1133">Transmembrane helix</keyword>
<keyword id="KW-0813">Transport</keyword>
<sequence>MLELLPTAVEGVSQAQITGRPEWIWLALGTALMGLGTLYFLVKGMGVSDPDAKKFYAITTLVPAIAFTMYLSMLLGYGLTMVPFGGEQNPIYWARYADWLFTTPLLLLDLALLVDADQGTILALVGADGIMIGTGLVGALTKVYSYRFVWWAISTAAMLYILYVLFFGFTSKAESMRPEVASTFKVLRNVTVVLWSAYPVVWLIGSEGAGIVPLNIETLLFMVLDVSAKVGFGLILLRSRAIFGEAEAPEPSAGDGAAATSD</sequence>
<gene>
    <name type="primary">bop</name>
    <name type="ordered locus">VNG_1467G</name>
</gene>